<keyword id="KW-0325">Glycoprotein</keyword>
<keyword id="KW-0328">Glycosyltransferase</keyword>
<keyword id="KW-0333">Golgi apparatus</keyword>
<keyword id="KW-0472">Membrane</keyword>
<keyword id="KW-1185">Reference proteome</keyword>
<keyword id="KW-0735">Signal-anchor</keyword>
<keyword id="KW-0808">Transferase</keyword>
<keyword id="KW-0812">Transmembrane</keyword>
<keyword id="KW-1133">Transmembrane helix</keyword>
<sequence>MALPSSRRFKSPTTLAFFLVGVTLVVLNQWFLQEHRQEKAKGPVATRRSLAAVVQRSPLFQVPPCVANASANLLTGFQLLPARIQDFLRYRHCRRFPQLWDAPPKCAGPRGVFLLLAVKSSPAHYERRELIRRTWGQERSYSGRQVLRLFLVGTSPPEEAAREPQLADLLSLEAREYGDVLQWDFSDTFLNLTLKHLHLLDWTAEHCPGVSFLLSCDDDVFVHTANVLSFLEVQSPEHHLFTGQLMVGSVPVRESGSKYFVPPQIFPGVAYPAYCSGGGFLLSRYTVRNLRSAAHHVPLFPIDDAYMGMCLQQAGLAPSSHQGIRPFGVQLPNVQRLSLDPCMYRELLLVHRFAPYEMLLMWKALHNPALHCSHKQVAGSPTAGEQNPDAH</sequence>
<proteinExistence type="evidence at transcript level"/>
<organism>
    <name type="scientific">Mus musculus</name>
    <name type="common">Mouse</name>
    <dbReference type="NCBI Taxonomy" id="10090"/>
    <lineage>
        <taxon>Eukaryota</taxon>
        <taxon>Metazoa</taxon>
        <taxon>Chordata</taxon>
        <taxon>Craniata</taxon>
        <taxon>Vertebrata</taxon>
        <taxon>Euteleostomi</taxon>
        <taxon>Mammalia</taxon>
        <taxon>Eutheria</taxon>
        <taxon>Euarchontoglires</taxon>
        <taxon>Glires</taxon>
        <taxon>Rodentia</taxon>
        <taxon>Myomorpha</taxon>
        <taxon>Muroidea</taxon>
        <taxon>Muridae</taxon>
        <taxon>Murinae</taxon>
        <taxon>Mus</taxon>
        <taxon>Mus</taxon>
    </lineage>
</organism>
<evidence type="ECO:0000250" key="1"/>
<evidence type="ECO:0000250" key="2">
    <source>
        <dbReference type="UniProtKB" id="Q6ZMB0"/>
    </source>
</evidence>
<evidence type="ECO:0000255" key="3"/>
<evidence type="ECO:0000305" key="4"/>
<dbReference type="EC" id="2.4.1.147"/>
<dbReference type="EMBL" id="BC039789">
    <property type="status" value="NOT_ANNOTATED_CDS"/>
    <property type="molecule type" value="mRNA"/>
</dbReference>
<dbReference type="EMBL" id="AK140429">
    <property type="protein sequence ID" value="BAE24383.1"/>
    <property type="molecule type" value="mRNA"/>
</dbReference>
<dbReference type="CCDS" id="CCDS40027.1"/>
<dbReference type="RefSeq" id="NP_001074636.1">
    <property type="nucleotide sequence ID" value="NM_001081167.1"/>
</dbReference>
<dbReference type="SMR" id="Q3USF0"/>
<dbReference type="BioGRID" id="234871">
    <property type="interactions" value="1"/>
</dbReference>
<dbReference type="FunCoup" id="Q3USF0">
    <property type="interactions" value="92"/>
</dbReference>
<dbReference type="STRING" id="10090.ENSMUSP00000095879"/>
<dbReference type="CAZy" id="GT31">
    <property type="family name" value="Glycosyltransferase Family 31"/>
</dbReference>
<dbReference type="GlyCosmos" id="Q3USF0">
    <property type="glycosylation" value="2 sites, No reported glycans"/>
</dbReference>
<dbReference type="GlyGen" id="Q3USF0">
    <property type="glycosylation" value="3 sites"/>
</dbReference>
<dbReference type="PhosphoSitePlus" id="Q3USF0"/>
<dbReference type="PaxDb" id="10090-ENSMUSP00000095879"/>
<dbReference type="PeptideAtlas" id="Q3USF0"/>
<dbReference type="ProteomicsDB" id="277149"/>
<dbReference type="Antibodypedia" id="31219">
    <property type="antibodies" value="98 antibodies from 24 providers"/>
</dbReference>
<dbReference type="Ensembl" id="ENSMUST00000098278.4">
    <property type="protein sequence ID" value="ENSMUSP00000095879.3"/>
    <property type="gene ID" value="ENSMUSG00000074004.4"/>
</dbReference>
<dbReference type="GeneID" id="272411"/>
<dbReference type="KEGG" id="mmu:272411"/>
<dbReference type="UCSC" id="uc009ikf.1">
    <property type="organism name" value="mouse"/>
</dbReference>
<dbReference type="AGR" id="MGI:3039603"/>
<dbReference type="CTD" id="192134"/>
<dbReference type="MGI" id="MGI:3039603">
    <property type="gene designation" value="B3gnt6"/>
</dbReference>
<dbReference type="VEuPathDB" id="HostDB:ENSMUSG00000074004"/>
<dbReference type="eggNOG" id="KOG2287">
    <property type="taxonomic scope" value="Eukaryota"/>
</dbReference>
<dbReference type="GeneTree" id="ENSGT00940000163174"/>
<dbReference type="HOGENOM" id="CLU_036849_5_3_1"/>
<dbReference type="InParanoid" id="Q3USF0"/>
<dbReference type="OMA" id="MWKALHN"/>
<dbReference type="OrthoDB" id="2139606at2759"/>
<dbReference type="PhylomeDB" id="Q3USF0"/>
<dbReference type="TreeFam" id="TF318639"/>
<dbReference type="BRENDA" id="2.4.1.147">
    <property type="organism ID" value="3474"/>
</dbReference>
<dbReference type="Reactome" id="R-MMU-913709">
    <property type="pathway name" value="O-linked glycosylation of mucins"/>
</dbReference>
<dbReference type="UniPathway" id="UPA00378"/>
<dbReference type="BioGRID-ORCS" id="272411">
    <property type="hits" value="3 hits in 79 CRISPR screens"/>
</dbReference>
<dbReference type="ChiTaRS" id="B4gat1">
    <property type="organism name" value="mouse"/>
</dbReference>
<dbReference type="PRO" id="PR:Q3USF0"/>
<dbReference type="Proteomes" id="UP000000589">
    <property type="component" value="Chromosome 7"/>
</dbReference>
<dbReference type="RNAct" id="Q3USF0">
    <property type="molecule type" value="protein"/>
</dbReference>
<dbReference type="Bgee" id="ENSMUSG00000074004">
    <property type="expression patterns" value="Expressed in submandibular gland and 10 other cell types or tissues"/>
</dbReference>
<dbReference type="GO" id="GO:0000139">
    <property type="term" value="C:Golgi membrane"/>
    <property type="evidence" value="ECO:0007669"/>
    <property type="project" value="UniProtKB-SubCell"/>
</dbReference>
<dbReference type="GO" id="GO:0047224">
    <property type="term" value="F:acetylgalactosaminyl-O-glycosyl-glycoprotein beta-1,3-N-acetylglucosaminyltransferase activity"/>
    <property type="evidence" value="ECO:0007669"/>
    <property type="project" value="UniProtKB-EC"/>
</dbReference>
<dbReference type="GO" id="GO:0008378">
    <property type="term" value="F:galactosyltransferase activity"/>
    <property type="evidence" value="ECO:0007669"/>
    <property type="project" value="Ensembl"/>
</dbReference>
<dbReference type="GO" id="GO:0006486">
    <property type="term" value="P:protein glycosylation"/>
    <property type="evidence" value="ECO:0007669"/>
    <property type="project" value="UniProtKB-UniPathway"/>
</dbReference>
<dbReference type="FunFam" id="3.90.550.50:FF:000009">
    <property type="entry name" value="Hexosyltransferase"/>
    <property type="match status" value="1"/>
</dbReference>
<dbReference type="Gene3D" id="3.90.550.50">
    <property type="match status" value="1"/>
</dbReference>
<dbReference type="InterPro" id="IPR002659">
    <property type="entry name" value="Glyco_trans_31"/>
</dbReference>
<dbReference type="PANTHER" id="PTHR11214:SF382">
    <property type="entry name" value="ACETYLGALACTOSAMINYL-O-GLYCOSYL-GLYCOPROTEIN BETA-1,3-N-ACETYLGLUCOSAMINYLTRANSFERASE"/>
    <property type="match status" value="1"/>
</dbReference>
<dbReference type="PANTHER" id="PTHR11214">
    <property type="entry name" value="BETA-1,3-N-ACETYLGLUCOSAMINYLTRANSFERASE"/>
    <property type="match status" value="1"/>
</dbReference>
<dbReference type="Pfam" id="PF01762">
    <property type="entry name" value="Galactosyl_T"/>
    <property type="match status" value="1"/>
</dbReference>
<comment type="function">
    <text evidence="2">Beta-1,3-N-acetylglucosaminyltransferase that synthesizes the core 3 structure of the O-glycan, an important precursor in the biosynthesis of mucin-type glycoproteins. Plays an important role in the synthesis of mucin-type O-glycans in digestive organs.</text>
</comment>
<comment type="catalytic activity">
    <reaction evidence="2">
        <text>a 3-O-[N-acetyl-alpha-D-galactosaminyl]-L-threonyl-[protein] + UDP-N-acetyl-alpha-D-glucosamine = a 3-O-[N-acetyl-beta-D-glucosaminyl-(1-&gt;3)-N-acetyl-alpha-D-galactosaminyl]-L-threonyl-[protein] + UDP + H(+)</text>
        <dbReference type="Rhea" id="RHEA:46880"/>
        <dbReference type="Rhea" id="RHEA-COMP:11689"/>
        <dbReference type="Rhea" id="RHEA-COMP:11692"/>
        <dbReference type="ChEBI" id="CHEBI:15378"/>
        <dbReference type="ChEBI" id="CHEBI:57705"/>
        <dbReference type="ChEBI" id="CHEBI:58223"/>
        <dbReference type="ChEBI" id="CHEBI:87075"/>
        <dbReference type="ChEBI" id="CHEBI:87080"/>
        <dbReference type="EC" id="2.4.1.147"/>
    </reaction>
</comment>
<comment type="catalytic activity">
    <reaction evidence="2">
        <text>a 3-O-[N-acetyl-alpha-D-galactosaminyl]-L-seryl-[protein] + UDP-N-acetyl-alpha-D-glucosamine = 3-O-[N-acetyl-beta-D-glucosaminyl-(1-&gt;3)-N-acetyl-alpha-D-galactosaminyl]-L-seryl-[protein] + UDP + H(+)</text>
        <dbReference type="Rhea" id="RHEA:46884"/>
        <dbReference type="Rhea" id="RHEA-COMP:11691"/>
        <dbReference type="Rhea" id="RHEA-COMP:12788"/>
        <dbReference type="ChEBI" id="CHEBI:15378"/>
        <dbReference type="ChEBI" id="CHEBI:53604"/>
        <dbReference type="ChEBI" id="CHEBI:57705"/>
        <dbReference type="ChEBI" id="CHEBI:58223"/>
        <dbReference type="ChEBI" id="CHEBI:87079"/>
        <dbReference type="EC" id="2.4.1.147"/>
    </reaction>
</comment>
<comment type="pathway">
    <text>Protein modification; protein glycosylation.</text>
</comment>
<comment type="subcellular location">
    <subcellularLocation>
        <location evidence="1">Golgi apparatus membrane</location>
        <topology evidence="1">Single-pass type II membrane protein</topology>
    </subcellularLocation>
</comment>
<comment type="similarity">
    <text evidence="4">Belongs to the glycosyltransferase 31 family.</text>
</comment>
<protein>
    <recommendedName>
        <fullName>Acetylgalactosaminyl-O-glycosyl-glycoprotein beta-1,3-N-acetylglucosaminyltransferase</fullName>
        <ecNumber>2.4.1.147</ecNumber>
    </recommendedName>
    <alternativeName>
        <fullName>Core 3 synthase</fullName>
    </alternativeName>
    <alternativeName>
        <fullName>UDP-GlcNAc:betaGal beta-1,3-N-acetylglucosaminyltransferase 6</fullName>
        <shortName>BGnT-6</shortName>
        <shortName>Beta-1,3-Gn-T6</shortName>
        <shortName>Beta-1,3-N-acetylglucosaminyltransferase 6</shortName>
        <shortName>Beta3Gn-T6</shortName>
    </alternativeName>
</protein>
<accession>Q3USF0</accession>
<name>B3GN6_MOUSE</name>
<feature type="chain" id="PRO_0000289219" description="Acetylgalactosaminyl-O-glycosyl-glycoprotein beta-1,3-N-acetylglucosaminyltransferase">
    <location>
        <begin position="1"/>
        <end position="391"/>
    </location>
</feature>
<feature type="topological domain" description="Cytoplasmic" evidence="3">
    <location>
        <begin position="1"/>
        <end position="11"/>
    </location>
</feature>
<feature type="transmembrane region" description="Helical; Signal-anchor for type II membrane protein" evidence="3">
    <location>
        <begin position="12"/>
        <end position="32"/>
    </location>
</feature>
<feature type="topological domain" description="Lumenal" evidence="3">
    <location>
        <begin position="33"/>
        <end position="391"/>
    </location>
</feature>
<feature type="glycosylation site" description="N-linked (GlcNAc...) asparagine" evidence="3">
    <location>
        <position position="68"/>
    </location>
</feature>
<feature type="glycosylation site" description="N-linked (GlcNAc...) asparagine" evidence="3">
    <location>
        <position position="191"/>
    </location>
</feature>
<feature type="sequence conflict" description="In Ref. 2; BAE24383." evidence="4" ref="2">
    <original>R</original>
    <variation>G</variation>
    <location>
        <position position="133"/>
    </location>
</feature>
<feature type="sequence conflict" description="In Ref. 2; BAE24383." evidence="4" ref="2">
    <original>P</original>
    <variation>A</variation>
    <location>
        <position position="263"/>
    </location>
</feature>
<gene>
    <name type="primary">B3gnt6</name>
</gene>
<reference key="1">
    <citation type="journal article" date="2004" name="Genome Res.">
        <title>The status, quality, and expansion of the NIH full-length cDNA project: the Mammalian Gene Collection (MGC).</title>
        <authorList>
            <consortium name="The MGC Project Team"/>
        </authorList>
    </citation>
    <scope>NUCLEOTIDE SEQUENCE [LARGE SCALE MRNA]</scope>
    <source>
        <tissue>Salivary gland</tissue>
    </source>
</reference>
<reference key="2">
    <citation type="journal article" date="2005" name="Science">
        <title>The transcriptional landscape of the mammalian genome.</title>
        <authorList>
            <person name="Carninci P."/>
            <person name="Kasukawa T."/>
            <person name="Katayama S."/>
            <person name="Gough J."/>
            <person name="Frith M.C."/>
            <person name="Maeda N."/>
            <person name="Oyama R."/>
            <person name="Ravasi T."/>
            <person name="Lenhard B."/>
            <person name="Wells C."/>
            <person name="Kodzius R."/>
            <person name="Shimokawa K."/>
            <person name="Bajic V.B."/>
            <person name="Brenner S.E."/>
            <person name="Batalov S."/>
            <person name="Forrest A.R."/>
            <person name="Zavolan M."/>
            <person name="Davis M.J."/>
            <person name="Wilming L.G."/>
            <person name="Aidinis V."/>
            <person name="Allen J.E."/>
            <person name="Ambesi-Impiombato A."/>
            <person name="Apweiler R."/>
            <person name="Aturaliya R.N."/>
            <person name="Bailey T.L."/>
            <person name="Bansal M."/>
            <person name="Baxter L."/>
            <person name="Beisel K.W."/>
            <person name="Bersano T."/>
            <person name="Bono H."/>
            <person name="Chalk A.M."/>
            <person name="Chiu K.P."/>
            <person name="Choudhary V."/>
            <person name="Christoffels A."/>
            <person name="Clutterbuck D.R."/>
            <person name="Crowe M.L."/>
            <person name="Dalla E."/>
            <person name="Dalrymple B.P."/>
            <person name="de Bono B."/>
            <person name="Della Gatta G."/>
            <person name="di Bernardo D."/>
            <person name="Down T."/>
            <person name="Engstrom P."/>
            <person name="Fagiolini M."/>
            <person name="Faulkner G."/>
            <person name="Fletcher C.F."/>
            <person name="Fukushima T."/>
            <person name="Furuno M."/>
            <person name="Futaki S."/>
            <person name="Gariboldi M."/>
            <person name="Georgii-Hemming P."/>
            <person name="Gingeras T.R."/>
            <person name="Gojobori T."/>
            <person name="Green R.E."/>
            <person name="Gustincich S."/>
            <person name="Harbers M."/>
            <person name="Hayashi Y."/>
            <person name="Hensch T.K."/>
            <person name="Hirokawa N."/>
            <person name="Hill D."/>
            <person name="Huminiecki L."/>
            <person name="Iacono M."/>
            <person name="Ikeo K."/>
            <person name="Iwama A."/>
            <person name="Ishikawa T."/>
            <person name="Jakt M."/>
            <person name="Kanapin A."/>
            <person name="Katoh M."/>
            <person name="Kawasawa Y."/>
            <person name="Kelso J."/>
            <person name="Kitamura H."/>
            <person name="Kitano H."/>
            <person name="Kollias G."/>
            <person name="Krishnan S.P."/>
            <person name="Kruger A."/>
            <person name="Kummerfeld S.K."/>
            <person name="Kurochkin I.V."/>
            <person name="Lareau L.F."/>
            <person name="Lazarevic D."/>
            <person name="Lipovich L."/>
            <person name="Liu J."/>
            <person name="Liuni S."/>
            <person name="McWilliam S."/>
            <person name="Madan Babu M."/>
            <person name="Madera M."/>
            <person name="Marchionni L."/>
            <person name="Matsuda H."/>
            <person name="Matsuzawa S."/>
            <person name="Miki H."/>
            <person name="Mignone F."/>
            <person name="Miyake S."/>
            <person name="Morris K."/>
            <person name="Mottagui-Tabar S."/>
            <person name="Mulder N."/>
            <person name="Nakano N."/>
            <person name="Nakauchi H."/>
            <person name="Ng P."/>
            <person name="Nilsson R."/>
            <person name="Nishiguchi S."/>
            <person name="Nishikawa S."/>
            <person name="Nori F."/>
            <person name="Ohara O."/>
            <person name="Okazaki Y."/>
            <person name="Orlando V."/>
            <person name="Pang K.C."/>
            <person name="Pavan W.J."/>
            <person name="Pavesi G."/>
            <person name="Pesole G."/>
            <person name="Petrovsky N."/>
            <person name="Piazza S."/>
            <person name="Reed J."/>
            <person name="Reid J.F."/>
            <person name="Ring B.Z."/>
            <person name="Ringwald M."/>
            <person name="Rost B."/>
            <person name="Ruan Y."/>
            <person name="Salzberg S.L."/>
            <person name="Sandelin A."/>
            <person name="Schneider C."/>
            <person name="Schoenbach C."/>
            <person name="Sekiguchi K."/>
            <person name="Semple C.A."/>
            <person name="Seno S."/>
            <person name="Sessa L."/>
            <person name="Sheng Y."/>
            <person name="Shibata Y."/>
            <person name="Shimada H."/>
            <person name="Shimada K."/>
            <person name="Silva D."/>
            <person name="Sinclair B."/>
            <person name="Sperling S."/>
            <person name="Stupka E."/>
            <person name="Sugiura K."/>
            <person name="Sultana R."/>
            <person name="Takenaka Y."/>
            <person name="Taki K."/>
            <person name="Tammoja K."/>
            <person name="Tan S.L."/>
            <person name="Tang S."/>
            <person name="Taylor M.S."/>
            <person name="Tegner J."/>
            <person name="Teichmann S.A."/>
            <person name="Ueda H.R."/>
            <person name="van Nimwegen E."/>
            <person name="Verardo R."/>
            <person name="Wei C.L."/>
            <person name="Yagi K."/>
            <person name="Yamanishi H."/>
            <person name="Zabarovsky E."/>
            <person name="Zhu S."/>
            <person name="Zimmer A."/>
            <person name="Hide W."/>
            <person name="Bult C."/>
            <person name="Grimmond S.M."/>
            <person name="Teasdale R.D."/>
            <person name="Liu E.T."/>
            <person name="Brusic V."/>
            <person name="Quackenbush J."/>
            <person name="Wahlestedt C."/>
            <person name="Mattick J.S."/>
            <person name="Hume D.A."/>
            <person name="Kai C."/>
            <person name="Sasaki D."/>
            <person name="Tomaru Y."/>
            <person name="Fukuda S."/>
            <person name="Kanamori-Katayama M."/>
            <person name="Suzuki M."/>
            <person name="Aoki J."/>
            <person name="Arakawa T."/>
            <person name="Iida J."/>
            <person name="Imamura K."/>
            <person name="Itoh M."/>
            <person name="Kato T."/>
            <person name="Kawaji H."/>
            <person name="Kawagashira N."/>
            <person name="Kawashima T."/>
            <person name="Kojima M."/>
            <person name="Kondo S."/>
            <person name="Konno H."/>
            <person name="Nakano K."/>
            <person name="Ninomiya N."/>
            <person name="Nishio T."/>
            <person name="Okada M."/>
            <person name="Plessy C."/>
            <person name="Shibata K."/>
            <person name="Shiraki T."/>
            <person name="Suzuki S."/>
            <person name="Tagami M."/>
            <person name="Waki K."/>
            <person name="Watahiki A."/>
            <person name="Okamura-Oho Y."/>
            <person name="Suzuki H."/>
            <person name="Kawai J."/>
            <person name="Hayashizaki Y."/>
        </authorList>
    </citation>
    <scope>NUCLEOTIDE SEQUENCE [LARGE SCALE MRNA] OF 133-391</scope>
    <source>
        <strain>C57BL/6J</strain>
        <tissue>Medulla oblongata</tissue>
    </source>
</reference>